<reference key="1">
    <citation type="journal article" date="2009" name="PLoS ONE">
        <title>Complete genome sequence of Francisella tularensis subspecies holarctica FTNF002-00.</title>
        <authorList>
            <person name="Barabote R.D."/>
            <person name="Xie G."/>
            <person name="Brettin T.S."/>
            <person name="Hinrichs S.H."/>
            <person name="Fey P.D."/>
            <person name="Jay J.J."/>
            <person name="Engle J.L."/>
            <person name="Godbole S.D."/>
            <person name="Noronha J.M."/>
            <person name="Scheuermann R.H."/>
            <person name="Zhou L.W."/>
            <person name="Lion C."/>
            <person name="Dempsey M.P."/>
        </authorList>
    </citation>
    <scope>NUCLEOTIDE SEQUENCE [LARGE SCALE GENOMIC DNA]</scope>
    <source>
        <strain>FTNF002-00 / FTA</strain>
    </source>
</reference>
<protein>
    <recommendedName>
        <fullName evidence="2">D-alanine--D-alanine ligase</fullName>
        <ecNumber evidence="2">6.3.2.4</ecNumber>
    </recommendedName>
    <alternativeName>
        <fullName evidence="2">D-Ala-D-Ala ligase</fullName>
    </alternativeName>
    <alternativeName>
        <fullName evidence="2">D-alanylalanine synthetase</fullName>
    </alternativeName>
</protein>
<dbReference type="EC" id="6.3.2.4" evidence="2"/>
<dbReference type="EMBL" id="CP000803">
    <property type="protein sequence ID" value="ABU62492.1"/>
    <property type="molecule type" value="Genomic_DNA"/>
</dbReference>
<dbReference type="RefSeq" id="WP_003027426.1">
    <property type="nucleotide sequence ID" value="NC_009749.1"/>
</dbReference>
<dbReference type="SMR" id="A7NET9"/>
<dbReference type="KEGG" id="fta:FTA_2017"/>
<dbReference type="HOGENOM" id="CLU_039268_1_1_6"/>
<dbReference type="UniPathway" id="UPA00219"/>
<dbReference type="GO" id="GO:0005737">
    <property type="term" value="C:cytoplasm"/>
    <property type="evidence" value="ECO:0007669"/>
    <property type="project" value="UniProtKB-SubCell"/>
</dbReference>
<dbReference type="GO" id="GO:0005524">
    <property type="term" value="F:ATP binding"/>
    <property type="evidence" value="ECO:0007669"/>
    <property type="project" value="UniProtKB-KW"/>
</dbReference>
<dbReference type="GO" id="GO:0008716">
    <property type="term" value="F:D-alanine-D-alanine ligase activity"/>
    <property type="evidence" value="ECO:0007669"/>
    <property type="project" value="UniProtKB-UniRule"/>
</dbReference>
<dbReference type="GO" id="GO:0046872">
    <property type="term" value="F:metal ion binding"/>
    <property type="evidence" value="ECO:0007669"/>
    <property type="project" value="UniProtKB-KW"/>
</dbReference>
<dbReference type="GO" id="GO:0071555">
    <property type="term" value="P:cell wall organization"/>
    <property type="evidence" value="ECO:0007669"/>
    <property type="project" value="UniProtKB-KW"/>
</dbReference>
<dbReference type="GO" id="GO:0009252">
    <property type="term" value="P:peptidoglycan biosynthetic process"/>
    <property type="evidence" value="ECO:0007669"/>
    <property type="project" value="UniProtKB-UniRule"/>
</dbReference>
<dbReference type="GO" id="GO:0008360">
    <property type="term" value="P:regulation of cell shape"/>
    <property type="evidence" value="ECO:0007669"/>
    <property type="project" value="UniProtKB-KW"/>
</dbReference>
<dbReference type="Gene3D" id="3.40.50.20">
    <property type="match status" value="1"/>
</dbReference>
<dbReference type="Gene3D" id="3.30.1490.20">
    <property type="entry name" value="ATP-grasp fold, A domain"/>
    <property type="match status" value="1"/>
</dbReference>
<dbReference type="Gene3D" id="3.30.470.20">
    <property type="entry name" value="ATP-grasp fold, B domain"/>
    <property type="match status" value="1"/>
</dbReference>
<dbReference type="HAMAP" id="MF_00047">
    <property type="entry name" value="Dala_Dala_lig"/>
    <property type="match status" value="1"/>
</dbReference>
<dbReference type="InterPro" id="IPR011761">
    <property type="entry name" value="ATP-grasp"/>
</dbReference>
<dbReference type="InterPro" id="IPR013815">
    <property type="entry name" value="ATP_grasp_subdomain_1"/>
</dbReference>
<dbReference type="InterPro" id="IPR000291">
    <property type="entry name" value="D-Ala_lig_Van_CS"/>
</dbReference>
<dbReference type="InterPro" id="IPR005905">
    <property type="entry name" value="D_ala_D_ala"/>
</dbReference>
<dbReference type="InterPro" id="IPR011095">
    <property type="entry name" value="Dala_Dala_lig_C"/>
</dbReference>
<dbReference type="InterPro" id="IPR016185">
    <property type="entry name" value="PreATP-grasp_dom_sf"/>
</dbReference>
<dbReference type="NCBIfam" id="TIGR01205">
    <property type="entry name" value="D_ala_D_alaTIGR"/>
    <property type="match status" value="1"/>
</dbReference>
<dbReference type="NCBIfam" id="NF002378">
    <property type="entry name" value="PRK01372.1"/>
    <property type="match status" value="1"/>
</dbReference>
<dbReference type="NCBIfam" id="NF011167">
    <property type="entry name" value="PRK14569.1"/>
    <property type="match status" value="1"/>
</dbReference>
<dbReference type="PANTHER" id="PTHR23132">
    <property type="entry name" value="D-ALANINE--D-ALANINE LIGASE"/>
    <property type="match status" value="1"/>
</dbReference>
<dbReference type="PANTHER" id="PTHR23132:SF23">
    <property type="entry name" value="D-ALANINE--D-ALANINE LIGASE B"/>
    <property type="match status" value="1"/>
</dbReference>
<dbReference type="Pfam" id="PF07478">
    <property type="entry name" value="Dala_Dala_lig_C"/>
    <property type="match status" value="1"/>
</dbReference>
<dbReference type="PIRSF" id="PIRSF039102">
    <property type="entry name" value="Ddl/VanB"/>
    <property type="match status" value="1"/>
</dbReference>
<dbReference type="SUPFAM" id="SSF56059">
    <property type="entry name" value="Glutathione synthetase ATP-binding domain-like"/>
    <property type="match status" value="1"/>
</dbReference>
<dbReference type="SUPFAM" id="SSF52440">
    <property type="entry name" value="PreATP-grasp domain"/>
    <property type="match status" value="1"/>
</dbReference>
<dbReference type="PROSITE" id="PS50975">
    <property type="entry name" value="ATP_GRASP"/>
    <property type="match status" value="1"/>
</dbReference>
<dbReference type="PROSITE" id="PS00843">
    <property type="entry name" value="DALA_DALA_LIGASE_1"/>
    <property type="match status" value="1"/>
</dbReference>
<dbReference type="PROSITE" id="PS00844">
    <property type="entry name" value="DALA_DALA_LIGASE_2"/>
    <property type="match status" value="1"/>
</dbReference>
<gene>
    <name evidence="2" type="primary">ddl</name>
    <name type="ordered locus">FTA_2017</name>
</gene>
<proteinExistence type="inferred from homology"/>
<keyword id="KW-0067">ATP-binding</keyword>
<keyword id="KW-0133">Cell shape</keyword>
<keyword id="KW-0961">Cell wall biogenesis/degradation</keyword>
<keyword id="KW-0963">Cytoplasm</keyword>
<keyword id="KW-0436">Ligase</keyword>
<keyword id="KW-0460">Magnesium</keyword>
<keyword id="KW-0464">Manganese</keyword>
<keyword id="KW-0479">Metal-binding</keyword>
<keyword id="KW-0547">Nucleotide-binding</keyword>
<keyword id="KW-0573">Peptidoglycan synthesis</keyword>
<accession>A7NET9</accession>
<sequence length="296" mass="32772">MKNEKIVVLYGGDSPEREVSLKSGKAVLDSLISQGYDAVGVDASGKELVAKLLELKPDKCFVALHGEDGENGRVSALLEMLEIKHTSSSMKSSVITMDKMISKEILMHHRMPTPMAKFLTDKLVAEDEISFPVAVKPSSGGSSIATFKVKSIQELKHAYEEASKYGEVMIEQWVTGKEITVAIVNDEVYSSVWIEPQNEFYDYESKYSGKSIYHSPSGLCEQKELEVRQLAKKAYDLLGCSGHARVDFIYDDRGNFYIMEINSSPGMTDNSLSPKSAAAEGVDFDSFVKRIIEQAQ</sequence>
<comment type="function">
    <text evidence="2">Cell wall formation.</text>
</comment>
<comment type="catalytic activity">
    <reaction evidence="2">
        <text>2 D-alanine + ATP = D-alanyl-D-alanine + ADP + phosphate + H(+)</text>
        <dbReference type="Rhea" id="RHEA:11224"/>
        <dbReference type="ChEBI" id="CHEBI:15378"/>
        <dbReference type="ChEBI" id="CHEBI:30616"/>
        <dbReference type="ChEBI" id="CHEBI:43474"/>
        <dbReference type="ChEBI" id="CHEBI:57416"/>
        <dbReference type="ChEBI" id="CHEBI:57822"/>
        <dbReference type="ChEBI" id="CHEBI:456216"/>
        <dbReference type="EC" id="6.3.2.4"/>
    </reaction>
</comment>
<comment type="cofactor">
    <cofactor evidence="1">
        <name>Mg(2+)</name>
        <dbReference type="ChEBI" id="CHEBI:18420"/>
    </cofactor>
    <cofactor evidence="1">
        <name>Mn(2+)</name>
        <dbReference type="ChEBI" id="CHEBI:29035"/>
    </cofactor>
    <text evidence="1">Binds 2 magnesium or manganese ions per subunit.</text>
</comment>
<comment type="pathway">
    <text evidence="2">Cell wall biogenesis; peptidoglycan biosynthesis.</text>
</comment>
<comment type="subcellular location">
    <subcellularLocation>
        <location evidence="2">Cytoplasm</location>
    </subcellularLocation>
</comment>
<comment type="similarity">
    <text evidence="2">Belongs to the D-alanine--D-alanine ligase family.</text>
</comment>
<evidence type="ECO:0000250" key="1"/>
<evidence type="ECO:0000255" key="2">
    <source>
        <dbReference type="HAMAP-Rule" id="MF_00047"/>
    </source>
</evidence>
<feature type="chain" id="PRO_0000341094" description="D-alanine--D-alanine ligase">
    <location>
        <begin position="1"/>
        <end position="296"/>
    </location>
</feature>
<feature type="domain" description="ATP-grasp" evidence="2">
    <location>
        <begin position="103"/>
        <end position="293"/>
    </location>
</feature>
<feature type="binding site" evidence="2">
    <location>
        <begin position="129"/>
        <end position="180"/>
    </location>
    <ligand>
        <name>ATP</name>
        <dbReference type="ChEBI" id="CHEBI:30616"/>
    </ligand>
</feature>
<feature type="binding site" evidence="2">
    <location>
        <position position="247"/>
    </location>
    <ligand>
        <name>Mg(2+)</name>
        <dbReference type="ChEBI" id="CHEBI:18420"/>
        <label>1</label>
    </ligand>
</feature>
<feature type="binding site" evidence="2">
    <location>
        <position position="260"/>
    </location>
    <ligand>
        <name>Mg(2+)</name>
        <dbReference type="ChEBI" id="CHEBI:18420"/>
        <label>1</label>
    </ligand>
</feature>
<feature type="binding site" evidence="2">
    <location>
        <position position="260"/>
    </location>
    <ligand>
        <name>Mg(2+)</name>
        <dbReference type="ChEBI" id="CHEBI:18420"/>
        <label>2</label>
    </ligand>
</feature>
<feature type="binding site" evidence="2">
    <location>
        <position position="262"/>
    </location>
    <ligand>
        <name>Mg(2+)</name>
        <dbReference type="ChEBI" id="CHEBI:18420"/>
        <label>2</label>
    </ligand>
</feature>
<organism>
    <name type="scientific">Francisella tularensis subsp. holarctica (strain FTNF002-00 / FTA)</name>
    <dbReference type="NCBI Taxonomy" id="458234"/>
    <lineage>
        <taxon>Bacteria</taxon>
        <taxon>Pseudomonadati</taxon>
        <taxon>Pseudomonadota</taxon>
        <taxon>Gammaproteobacteria</taxon>
        <taxon>Thiotrichales</taxon>
        <taxon>Francisellaceae</taxon>
        <taxon>Francisella</taxon>
    </lineage>
</organism>
<name>DDL_FRATF</name>